<proteinExistence type="inferred from homology"/>
<gene>
    <name type="primary">atpFH</name>
    <name type="synonym">atpF</name>
    <name type="synonym">atpH</name>
    <name type="ordered locus">Mvan_4331</name>
</gene>
<keyword id="KW-0066">ATP synthesis</keyword>
<keyword id="KW-1003">Cell membrane</keyword>
<keyword id="KW-0138">CF(0)</keyword>
<keyword id="KW-0375">Hydrogen ion transport</keyword>
<keyword id="KW-0406">Ion transport</keyword>
<keyword id="KW-0472">Membrane</keyword>
<keyword id="KW-0511">Multifunctional enzyme</keyword>
<keyword id="KW-0812">Transmembrane</keyword>
<keyword id="KW-1133">Transmembrane helix</keyword>
<keyword id="KW-0813">Transport</keyword>
<name>ATPFD_MYCVP</name>
<feature type="chain" id="PRO_0000368898" description="ATP synthase subunit b-delta">
    <location>
        <begin position="1"/>
        <end position="445"/>
    </location>
</feature>
<feature type="transmembrane region" description="Helical" evidence="2">
    <location>
        <begin position="3"/>
        <end position="23"/>
    </location>
</feature>
<feature type="region of interest" description="ATP synthase subunit b">
    <location>
        <begin position="1"/>
        <end position="168"/>
    </location>
</feature>
<feature type="region of interest" description="ATP synthase subunit delta">
    <location>
        <begin position="169"/>
        <end position="445"/>
    </location>
</feature>
<accession>A1TD58</accession>
<organism>
    <name type="scientific">Mycolicibacterium vanbaalenii (strain DSM 7251 / JCM 13017 / BCRC 16820 / KCTC 9966 / NRRL B-24157 / PYR-1)</name>
    <name type="common">Mycobacterium vanbaalenii</name>
    <dbReference type="NCBI Taxonomy" id="350058"/>
    <lineage>
        <taxon>Bacteria</taxon>
        <taxon>Bacillati</taxon>
        <taxon>Actinomycetota</taxon>
        <taxon>Actinomycetes</taxon>
        <taxon>Mycobacteriales</taxon>
        <taxon>Mycobacteriaceae</taxon>
        <taxon>Mycolicibacterium</taxon>
    </lineage>
</organism>
<evidence type="ECO:0000250" key="1"/>
<evidence type="ECO:0000255" key="2"/>
<evidence type="ECO:0000305" key="3"/>
<sequence length="445" mass="47283">MSIFIGQLIGFAVIVFILVKWVVPPIKGLMQKQQEAVRVALAESAEAGKKLADADAMHAKAVEDAKAAGAKVTEEAQQDSQRITAQLAEQADAEAERIKAQGAQQVQLMRQQLIRQLRSGLGSESVQKAEEIVRNYVSDPAAQASTVDRFLDELDAMAPSSAVLEAGASLNLRAASREALAELVKKFESVAESADTAALATLADNLSAVARLLLTSATLDKHLAEPTGDSAAKVRLLERLFGGKVDDNTMDLLKTAVAQRWSTEGNLIDAVEHVARLALLVRAEREGQSEEVEDQLFRFGRVLDAQSQLSRLLADPVIPADKRVALLKKVLDSGGGVNPIAEALLTQTVELIRGASADDAVNDLAELAVARRGEAVAQVTAAADLSDAQRTRLTEVLSRIYGTPVSIQLEVDPEVLGGLLITVGDEVIDGSISSRLAAARTGLPD</sequence>
<comment type="function">
    <text evidence="1">F(1)F(0) ATP synthase produces ATP from ADP in the presence of a proton or sodium gradient. F-type ATPases consist of two structural domains, F(1) containing the extramembraneous catalytic core and F(0) containing the membrane proton channel, linked together by a central stalk and a peripheral stalk. During catalysis, ATP synthesis in the catalytic domain of F(1) is coupled via a rotary mechanism of the central stalk subunits to proton translocation (By similarity).</text>
</comment>
<comment type="function">
    <text evidence="1">This fusion protein includes a component of the F(0) channel (subunit b) and of the F(1) subunit (subunit delta). Two copies of subunit b and one of delta together form the peripheral 'stator' stalk which links F(1) to F(0) (By similarity).</text>
</comment>
<comment type="subunit">
    <text evidence="1">F-type ATPases have 2 components, F(1) - the catalytic core - and F(0) - the membrane proton channel. F(1) has five subunits: alpha(3), beta(3), gamma(1), delta(1), epsilon(1). F(0) has three main subunits: a(1), b(2) and c(10-14). The alpha and beta chains form an alternating ring which encloses part of the gamma chain. F(1) is attached to F(0) by a central stalk formed by the gamma and epsilon chains, while a peripheral stalk is formed by the delta and b chains (By similarity).</text>
</comment>
<comment type="subcellular location">
    <subcellularLocation>
        <location evidence="1">Cell membrane</location>
        <topology evidence="1">Single-pass membrane protein</topology>
    </subcellularLocation>
</comment>
<comment type="similarity">
    <text evidence="3">In the N-terminal section; belongs to the ATPase B chain family.</text>
</comment>
<comment type="similarity">
    <text evidence="3">In the C-terminal section; belongs to the ATPase delta chain family.</text>
</comment>
<reference key="1">
    <citation type="submission" date="2006-12" db="EMBL/GenBank/DDBJ databases">
        <title>Complete sequence of Mycobacterium vanbaalenii PYR-1.</title>
        <authorList>
            <consortium name="US DOE Joint Genome Institute"/>
            <person name="Copeland A."/>
            <person name="Lucas S."/>
            <person name="Lapidus A."/>
            <person name="Barry K."/>
            <person name="Detter J.C."/>
            <person name="Glavina del Rio T."/>
            <person name="Hammon N."/>
            <person name="Israni S."/>
            <person name="Dalin E."/>
            <person name="Tice H."/>
            <person name="Pitluck S."/>
            <person name="Singan V."/>
            <person name="Schmutz J."/>
            <person name="Larimer F."/>
            <person name="Land M."/>
            <person name="Hauser L."/>
            <person name="Kyrpides N."/>
            <person name="Anderson I.J."/>
            <person name="Miller C."/>
            <person name="Richardson P."/>
        </authorList>
    </citation>
    <scope>NUCLEOTIDE SEQUENCE [LARGE SCALE GENOMIC DNA]</scope>
    <source>
        <strain>DSM 7251 / JCM 13017 / BCRC 16820 / KCTC 9966 / NRRL B-24157 / PYR-1</strain>
    </source>
</reference>
<dbReference type="EMBL" id="CP000511">
    <property type="protein sequence ID" value="ABM15108.1"/>
    <property type="molecule type" value="Genomic_DNA"/>
</dbReference>
<dbReference type="RefSeq" id="WP_011781486.1">
    <property type="nucleotide sequence ID" value="NC_008726.1"/>
</dbReference>
<dbReference type="SMR" id="A1TD58"/>
<dbReference type="STRING" id="350058.Mvan_4331"/>
<dbReference type="KEGG" id="mva:Mvan_4331"/>
<dbReference type="eggNOG" id="COG0711">
    <property type="taxonomic scope" value="Bacteria"/>
</dbReference>
<dbReference type="eggNOG" id="COG0712">
    <property type="taxonomic scope" value="Bacteria"/>
</dbReference>
<dbReference type="HOGENOM" id="CLU_722652_0_0_11"/>
<dbReference type="Proteomes" id="UP000009159">
    <property type="component" value="Chromosome"/>
</dbReference>
<dbReference type="GO" id="GO:0005886">
    <property type="term" value="C:plasma membrane"/>
    <property type="evidence" value="ECO:0007669"/>
    <property type="project" value="UniProtKB-SubCell"/>
</dbReference>
<dbReference type="GO" id="GO:0045259">
    <property type="term" value="C:proton-transporting ATP synthase complex"/>
    <property type="evidence" value="ECO:0007669"/>
    <property type="project" value="UniProtKB-KW"/>
</dbReference>
<dbReference type="GO" id="GO:0046933">
    <property type="term" value="F:proton-transporting ATP synthase activity, rotational mechanism"/>
    <property type="evidence" value="ECO:0007669"/>
    <property type="project" value="UniProtKB-UniRule"/>
</dbReference>
<dbReference type="CDD" id="cd06503">
    <property type="entry name" value="ATP-synt_Fo_b"/>
    <property type="match status" value="1"/>
</dbReference>
<dbReference type="Gene3D" id="1.10.520.20">
    <property type="entry name" value="N-terminal domain of the delta subunit of the F1F0-ATP synthase"/>
    <property type="match status" value="1"/>
</dbReference>
<dbReference type="HAMAP" id="MF_01398">
    <property type="entry name" value="ATP_synth_b_bprime"/>
    <property type="match status" value="1"/>
</dbReference>
<dbReference type="HAMAP" id="MF_01416">
    <property type="entry name" value="ATP_synth_delta_bact"/>
    <property type="match status" value="1"/>
</dbReference>
<dbReference type="InterPro" id="IPR028987">
    <property type="entry name" value="ATP_synth_B-like_membr_sf"/>
</dbReference>
<dbReference type="InterPro" id="IPR002146">
    <property type="entry name" value="ATP_synth_b/b'su_bac/chlpt"/>
</dbReference>
<dbReference type="InterPro" id="IPR026015">
    <property type="entry name" value="ATP_synth_OSCP/delta_N_sf"/>
</dbReference>
<dbReference type="InterPro" id="IPR000711">
    <property type="entry name" value="ATPase_OSCP/dsu"/>
</dbReference>
<dbReference type="NCBIfam" id="TIGR01145">
    <property type="entry name" value="ATP_synt_delta"/>
    <property type="match status" value="1"/>
</dbReference>
<dbReference type="NCBIfam" id="NF009961">
    <property type="entry name" value="PRK13428.1"/>
    <property type="match status" value="1"/>
</dbReference>
<dbReference type="NCBIfam" id="NF009967">
    <property type="entry name" value="PRK13430.1"/>
    <property type="match status" value="1"/>
</dbReference>
<dbReference type="PANTHER" id="PTHR11910">
    <property type="entry name" value="ATP SYNTHASE DELTA CHAIN"/>
    <property type="match status" value="1"/>
</dbReference>
<dbReference type="Pfam" id="PF00430">
    <property type="entry name" value="ATP-synt_B"/>
    <property type="match status" value="1"/>
</dbReference>
<dbReference type="Pfam" id="PF00213">
    <property type="entry name" value="OSCP"/>
    <property type="match status" value="1"/>
</dbReference>
<dbReference type="SUPFAM" id="SSF81573">
    <property type="entry name" value="F1F0 ATP synthase subunit B, membrane domain"/>
    <property type="match status" value="1"/>
</dbReference>
<dbReference type="SUPFAM" id="SSF47928">
    <property type="entry name" value="N-terminal domain of the delta subunit of the F1F0-ATP synthase"/>
    <property type="match status" value="1"/>
</dbReference>
<protein>
    <recommendedName>
        <fullName>ATP synthase subunit b-delta</fullName>
    </recommendedName>
    <domain>
        <recommendedName>
            <fullName>ATP synthase subunit b</fullName>
        </recommendedName>
        <alternativeName>
            <fullName>ATP synthase F(0) sector subunit b 2</fullName>
        </alternativeName>
        <alternativeName>
            <fullName>ATPase subunit I 2</fullName>
        </alternativeName>
        <alternativeName>
            <fullName>F-type ATPase subunit b 2</fullName>
            <shortName>F-ATPase subunit b 2</shortName>
        </alternativeName>
    </domain>
    <domain>
        <recommendedName>
            <fullName>ATP synthase subunit delta</fullName>
        </recommendedName>
        <alternativeName>
            <fullName>ATP synthase F(1) sector subunit delta</fullName>
        </alternativeName>
        <alternativeName>
            <fullName>F-type ATPase subunit delta</fullName>
            <shortName>F-ATPase subunit delta</shortName>
        </alternativeName>
    </domain>
</protein>